<comment type="function">
    <text evidence="1">Serine/threonine-protein kinase that plays a central role in centriole duplication. Able to trigger procentriole formation on the surface of the mother centriole cylinder, using mother centriole as a platform, leading to the recruitment of centriole biogenesis proteins such as sas-6. When overexpressed, it is able to induce centrosome amplification through the simultaneous generation of multiple procentrioles adjoining each parental centriole during S phase. Centrosome amplification following overexpression can initiate tumorigenesis, highlighting the importance of centrosome regulation in cancers (By similarity).</text>
</comment>
<comment type="catalytic activity">
    <reaction>
        <text>L-seryl-[protein] + ATP = O-phospho-L-seryl-[protein] + ADP + H(+)</text>
        <dbReference type="Rhea" id="RHEA:17989"/>
        <dbReference type="Rhea" id="RHEA-COMP:9863"/>
        <dbReference type="Rhea" id="RHEA-COMP:11604"/>
        <dbReference type="ChEBI" id="CHEBI:15378"/>
        <dbReference type="ChEBI" id="CHEBI:29999"/>
        <dbReference type="ChEBI" id="CHEBI:30616"/>
        <dbReference type="ChEBI" id="CHEBI:83421"/>
        <dbReference type="ChEBI" id="CHEBI:456216"/>
        <dbReference type="EC" id="2.7.11.21"/>
    </reaction>
</comment>
<comment type="catalytic activity">
    <reaction>
        <text>L-threonyl-[protein] + ATP = O-phospho-L-threonyl-[protein] + ADP + H(+)</text>
        <dbReference type="Rhea" id="RHEA:46608"/>
        <dbReference type="Rhea" id="RHEA-COMP:11060"/>
        <dbReference type="Rhea" id="RHEA-COMP:11605"/>
        <dbReference type="ChEBI" id="CHEBI:15378"/>
        <dbReference type="ChEBI" id="CHEBI:30013"/>
        <dbReference type="ChEBI" id="CHEBI:30616"/>
        <dbReference type="ChEBI" id="CHEBI:61977"/>
        <dbReference type="ChEBI" id="CHEBI:456216"/>
        <dbReference type="EC" id="2.7.11.21"/>
    </reaction>
</comment>
<comment type="subunit">
    <text evidence="1">Homodimer.</text>
</comment>
<comment type="subcellular location">
    <subcellularLocation>
        <location evidence="1">Cytoplasm</location>
        <location evidence="1">Cytoskeleton</location>
        <location evidence="1">Microtubule organizing center</location>
        <location evidence="1">Centrosome</location>
        <location evidence="1">Centriole</location>
    </subcellularLocation>
</comment>
<comment type="PTM">
    <text evidence="1">Ubiquitinated by the SCF(Slimb) ubiquitin ligase complex; leading to its degradation by the proteasome during interphase and regulating centriole number and ensuring the block to centriole reduplication.</text>
</comment>
<comment type="similarity">
    <text evidence="3 4 5">Belongs to the protein kinase superfamily. Ser/Thr protein kinase family. CDC5/Polo subfamily.</text>
</comment>
<feature type="chain" id="PRO_0000385288" description="Serine/threonine-protein kinase PLK4">
    <location>
        <begin position="1"/>
        <end position="770"/>
    </location>
</feature>
<feature type="domain" description="Protein kinase" evidence="3">
    <location>
        <begin position="14"/>
        <end position="267"/>
    </location>
</feature>
<feature type="domain" description="Cryptic POLO box 1 (CPB1)" evidence="4">
    <location>
        <begin position="383"/>
        <end position="500"/>
    </location>
</feature>
<feature type="domain" description="Cryptic POLO box 2 (CPB2)" evidence="5">
    <location>
        <begin position="501"/>
        <end position="604"/>
    </location>
</feature>
<feature type="domain" description="POLO box" evidence="2">
    <location>
        <begin position="662"/>
        <end position="741"/>
    </location>
</feature>
<feature type="active site" description="Proton acceptor" evidence="3">
    <location>
        <position position="138"/>
    </location>
</feature>
<feature type="binding site" evidence="3">
    <location>
        <begin position="20"/>
        <end position="28"/>
    </location>
    <ligand>
        <name>ATP</name>
        <dbReference type="ChEBI" id="CHEBI:30616"/>
    </ligand>
</feature>
<feature type="binding site" evidence="3">
    <location>
        <position position="43"/>
    </location>
    <ligand>
        <name>ATP</name>
        <dbReference type="ChEBI" id="CHEBI:30616"/>
    </ligand>
</feature>
<protein>
    <recommendedName>
        <fullName>Serine/threonine-protein kinase PLK4</fullName>
        <ecNumber>2.7.11.21</ecNumber>
    </recommendedName>
    <alternativeName>
        <fullName>Polo-like kinase 4</fullName>
        <shortName>PLK-4</shortName>
    </alternativeName>
    <alternativeName>
        <fullName>Serine/threonine-protein kinase SAK</fullName>
    </alternativeName>
</protein>
<accession>B3M6I4</accession>
<gene>
    <name type="primary">SAK</name>
    <name type="ORF">GF10707</name>
</gene>
<sequence length="770" mass="87007">MLSNRAFGETIEEYEVQHLLGKGGFASVYKARCLHTHQDVAIKMIDKKLIQGTGLTNRVRQEVEIHSRLKHPSVLQLYTFFQDANYVYLVLELAHNGELHRYMNHIGRPFTEAEAASILRQVVAGLLYLHSHNIMHRDISLSNLLLSKEMHVKIADFGLATQLKRPDERHVTMCGTPNYISPEVVSRTSHGLPADVWSVGCMLYTLLVGRPPFETDAVQTTLNKVVLSEYIMPTHLSFEAQDLINKLLKKVPHERIALEHVLRHPFLTKRLENSSNGVYSTPGALNVFSQSLESGDSGIITFASSDSRNSQRLRSVENTAPLQGLPQIQEEYMQDKYRPTYDQPGLFKQPSSTRMEHNWLTTEKDTPFRMDVPMKEKPAPLKEERISVPPLNTKRLLPTRYKTKNAIMSILRNGEVVLEFLKYRPKFNEDRVTDICRISDDGRRIIIYQPDPGRGLPIRDHPPELQIPNEDCVYNYDSLPSKHWKKYVYADRFVGLVKSKTPKVTYFSALGKCQLMETMTDFEIRFYSGAKLTKSPSEGLKVHNANGMLLSDHVGSEARSMIDHGNECFTHCVSISNALEMAQTKDNSCFPVTIGRRPVTEVQPSQRLDGLRDTTNFAYSTPKSNQGSINFSVSTISSIRNTTDFGSNSSRTNMRASQQNIPIKRINLPDIGVATELSHGVVQVQFYDGSVVSIIPDIQGGGVTYTQSNGISTHFGKDDDLPFTVREKLSQLPHIQLKLKTAPLLSNSRKIEFNAMTPKTTTPCYNRMLL</sequence>
<evidence type="ECO:0000250" key="1"/>
<evidence type="ECO:0000255" key="2">
    <source>
        <dbReference type="PROSITE-ProRule" id="PRU00154"/>
    </source>
</evidence>
<evidence type="ECO:0000255" key="3">
    <source>
        <dbReference type="PROSITE-ProRule" id="PRU00159"/>
    </source>
</evidence>
<evidence type="ECO:0000255" key="4">
    <source>
        <dbReference type="PROSITE-ProRule" id="PRU01328"/>
    </source>
</evidence>
<evidence type="ECO:0000255" key="5">
    <source>
        <dbReference type="PROSITE-ProRule" id="PRU01329"/>
    </source>
</evidence>
<reference key="1">
    <citation type="journal article" date="2007" name="Nature">
        <title>Evolution of genes and genomes on the Drosophila phylogeny.</title>
        <authorList>
            <consortium name="Drosophila 12 genomes consortium"/>
        </authorList>
    </citation>
    <scope>NUCLEOTIDE SEQUENCE [LARGE SCALE GENOMIC DNA]</scope>
    <source>
        <strain>Tucson 14024-0371.13</strain>
    </source>
</reference>
<name>PLK4_DROAN</name>
<organism>
    <name type="scientific">Drosophila ananassae</name>
    <name type="common">Fruit fly</name>
    <dbReference type="NCBI Taxonomy" id="7217"/>
    <lineage>
        <taxon>Eukaryota</taxon>
        <taxon>Metazoa</taxon>
        <taxon>Ecdysozoa</taxon>
        <taxon>Arthropoda</taxon>
        <taxon>Hexapoda</taxon>
        <taxon>Insecta</taxon>
        <taxon>Pterygota</taxon>
        <taxon>Neoptera</taxon>
        <taxon>Endopterygota</taxon>
        <taxon>Diptera</taxon>
        <taxon>Brachycera</taxon>
        <taxon>Muscomorpha</taxon>
        <taxon>Ephydroidea</taxon>
        <taxon>Drosophilidae</taxon>
        <taxon>Drosophila</taxon>
        <taxon>Sophophora</taxon>
    </lineage>
</organism>
<keyword id="KW-0067">ATP-binding</keyword>
<keyword id="KW-0963">Cytoplasm</keyword>
<keyword id="KW-0206">Cytoskeleton</keyword>
<keyword id="KW-0418">Kinase</keyword>
<keyword id="KW-0547">Nucleotide-binding</keyword>
<keyword id="KW-1185">Reference proteome</keyword>
<keyword id="KW-0723">Serine/threonine-protein kinase</keyword>
<keyword id="KW-0808">Transferase</keyword>
<keyword id="KW-0832">Ubl conjugation</keyword>
<proteinExistence type="inferred from homology"/>
<dbReference type="EC" id="2.7.11.21"/>
<dbReference type="EMBL" id="CH902618">
    <property type="protein sequence ID" value="EDV40833.1"/>
    <property type="molecule type" value="Genomic_DNA"/>
</dbReference>
<dbReference type="SMR" id="B3M6I4"/>
<dbReference type="FunCoup" id="B3M6I4">
    <property type="interactions" value="334"/>
</dbReference>
<dbReference type="STRING" id="7217.B3M6I4"/>
<dbReference type="EnsemblMetazoa" id="FBtr0115407">
    <property type="protein sequence ID" value="FBpp0113899"/>
    <property type="gene ID" value="FBgn0087748"/>
</dbReference>
<dbReference type="EnsemblMetazoa" id="XM_001957991.4">
    <property type="protein sequence ID" value="XP_001958027.1"/>
    <property type="gene ID" value="LOC6493575"/>
</dbReference>
<dbReference type="GeneID" id="6493575"/>
<dbReference type="KEGG" id="dan:6493575"/>
<dbReference type="eggNOG" id="KOG0575">
    <property type="taxonomic scope" value="Eukaryota"/>
</dbReference>
<dbReference type="HOGENOM" id="CLU_008726_2_0_1"/>
<dbReference type="InParanoid" id="B3M6I4"/>
<dbReference type="OMA" id="LPSKHWK"/>
<dbReference type="OrthoDB" id="10004143at2759"/>
<dbReference type="PhylomeDB" id="B3M6I4"/>
<dbReference type="ChiTaRS" id="SAK">
    <property type="organism name" value="fly"/>
</dbReference>
<dbReference type="Proteomes" id="UP000007801">
    <property type="component" value="Unassembled WGS sequence"/>
</dbReference>
<dbReference type="GO" id="GO:0005814">
    <property type="term" value="C:centriole"/>
    <property type="evidence" value="ECO:0007669"/>
    <property type="project" value="UniProtKB-SubCell"/>
</dbReference>
<dbReference type="GO" id="GO:0005737">
    <property type="term" value="C:cytoplasm"/>
    <property type="evidence" value="ECO:0007669"/>
    <property type="project" value="UniProtKB-KW"/>
</dbReference>
<dbReference type="GO" id="GO:0005634">
    <property type="term" value="C:nucleus"/>
    <property type="evidence" value="ECO:0007669"/>
    <property type="project" value="TreeGrafter"/>
</dbReference>
<dbReference type="GO" id="GO:0005524">
    <property type="term" value="F:ATP binding"/>
    <property type="evidence" value="ECO:0007669"/>
    <property type="project" value="UniProtKB-KW"/>
</dbReference>
<dbReference type="GO" id="GO:0042802">
    <property type="term" value="F:identical protein binding"/>
    <property type="evidence" value="ECO:0007669"/>
    <property type="project" value="EnsemblMetazoa"/>
</dbReference>
<dbReference type="GO" id="GO:0106310">
    <property type="term" value="F:protein serine kinase activity"/>
    <property type="evidence" value="ECO:0007669"/>
    <property type="project" value="RHEA"/>
</dbReference>
<dbReference type="GO" id="GO:0004674">
    <property type="term" value="F:protein serine/threonine kinase activity"/>
    <property type="evidence" value="ECO:0007669"/>
    <property type="project" value="UniProtKB-KW"/>
</dbReference>
<dbReference type="GO" id="GO:0007099">
    <property type="term" value="P:centriole replication"/>
    <property type="evidence" value="ECO:0007669"/>
    <property type="project" value="EnsemblMetazoa"/>
</dbReference>
<dbReference type="GO" id="GO:0007140">
    <property type="term" value="P:male meiotic nuclear division"/>
    <property type="evidence" value="ECO:0007669"/>
    <property type="project" value="EnsemblMetazoa"/>
</dbReference>
<dbReference type="GO" id="GO:0045732">
    <property type="term" value="P:positive regulation of protein catabolic process"/>
    <property type="evidence" value="ECO:0007669"/>
    <property type="project" value="EnsemblMetazoa"/>
</dbReference>
<dbReference type="GO" id="GO:0046599">
    <property type="term" value="P:regulation of centriole replication"/>
    <property type="evidence" value="ECO:0007669"/>
    <property type="project" value="EnsemblMetazoa"/>
</dbReference>
<dbReference type="GO" id="GO:0031647">
    <property type="term" value="P:regulation of protein stability"/>
    <property type="evidence" value="ECO:0007669"/>
    <property type="project" value="EnsemblMetazoa"/>
</dbReference>
<dbReference type="GO" id="GO:0007288">
    <property type="term" value="P:sperm axoneme assembly"/>
    <property type="evidence" value="ECO:0007669"/>
    <property type="project" value="EnsemblMetazoa"/>
</dbReference>
<dbReference type="GO" id="GO:0035186">
    <property type="term" value="P:syncytial blastoderm mitotic cell cycle"/>
    <property type="evidence" value="ECO:0007669"/>
    <property type="project" value="EnsemblMetazoa"/>
</dbReference>
<dbReference type="CDD" id="cd13114">
    <property type="entry name" value="POLO_box_Plk4_1"/>
    <property type="match status" value="1"/>
</dbReference>
<dbReference type="CDD" id="cd13116">
    <property type="entry name" value="POLO_box_Plk4_3"/>
    <property type="match status" value="1"/>
</dbReference>
<dbReference type="FunFam" id="3.30.200.20:FF:000042">
    <property type="entry name" value="Aurora kinase A"/>
    <property type="match status" value="1"/>
</dbReference>
<dbReference type="FunFam" id="1.10.510.10:FF:000576">
    <property type="entry name" value="Serine/threonine-protein kinase PLK4"/>
    <property type="match status" value="1"/>
</dbReference>
<dbReference type="FunFam" id="2.40.50.930:FF:000001">
    <property type="entry name" value="Serine/threonine-protein kinase PLK4"/>
    <property type="match status" value="1"/>
</dbReference>
<dbReference type="FunFam" id="3.30.1120.130:FF:000002">
    <property type="entry name" value="Serine/threonine-protein kinase PLK4"/>
    <property type="match status" value="1"/>
</dbReference>
<dbReference type="FunFam" id="3.30.1120.120:FF:000001">
    <property type="entry name" value="serine/threonine-protein kinase PLK4 isoform X2"/>
    <property type="match status" value="1"/>
</dbReference>
<dbReference type="Gene3D" id="2.40.50.930">
    <property type="match status" value="1"/>
</dbReference>
<dbReference type="Gene3D" id="3.30.1120.120">
    <property type="match status" value="1"/>
</dbReference>
<dbReference type="Gene3D" id="3.30.1120.130">
    <property type="match status" value="1"/>
</dbReference>
<dbReference type="Gene3D" id="1.10.510.10">
    <property type="entry name" value="Transferase(Phosphotransferase) domain 1"/>
    <property type="match status" value="1"/>
</dbReference>
<dbReference type="InterPro" id="IPR011009">
    <property type="entry name" value="Kinase-like_dom_sf"/>
</dbReference>
<dbReference type="InterPro" id="IPR047108">
    <property type="entry name" value="Plk4-like_POLO_box_2_sf"/>
</dbReference>
<dbReference type="InterPro" id="IPR000959">
    <property type="entry name" value="POLO_box_dom"/>
</dbReference>
<dbReference type="InterPro" id="IPR033699">
    <property type="entry name" value="POLO_box_Plk4_1"/>
</dbReference>
<dbReference type="InterPro" id="IPR033698">
    <property type="entry name" value="POLO_box_Plk4_2"/>
</dbReference>
<dbReference type="InterPro" id="IPR033696">
    <property type="entry name" value="POLO_box_Plk4_C"/>
</dbReference>
<dbReference type="InterPro" id="IPR000719">
    <property type="entry name" value="Prot_kinase_dom"/>
</dbReference>
<dbReference type="InterPro" id="IPR017441">
    <property type="entry name" value="Protein_kinase_ATP_BS"/>
</dbReference>
<dbReference type="InterPro" id="IPR046437">
    <property type="entry name" value="Ser_Thr-PK_POLO_box_1_sf"/>
</dbReference>
<dbReference type="InterPro" id="IPR008266">
    <property type="entry name" value="Tyr_kinase_AS"/>
</dbReference>
<dbReference type="PANTHER" id="PTHR24345">
    <property type="entry name" value="SERINE/THREONINE-PROTEIN KINASE PLK"/>
    <property type="match status" value="1"/>
</dbReference>
<dbReference type="PANTHER" id="PTHR24345:SF91">
    <property type="entry name" value="SERINE_THREONINE-PROTEIN KINASE PLK4"/>
    <property type="match status" value="1"/>
</dbReference>
<dbReference type="Pfam" id="PF00069">
    <property type="entry name" value="Pkinase"/>
    <property type="match status" value="1"/>
</dbReference>
<dbReference type="Pfam" id="PF18190">
    <property type="entry name" value="Plk4_PB1"/>
    <property type="match status" value="1"/>
</dbReference>
<dbReference type="Pfam" id="PF18409">
    <property type="entry name" value="Plk4_PB2"/>
    <property type="match status" value="1"/>
</dbReference>
<dbReference type="SUPFAM" id="SSF82615">
    <property type="entry name" value="Polo-box domain"/>
    <property type="match status" value="1"/>
</dbReference>
<dbReference type="SUPFAM" id="SSF56112">
    <property type="entry name" value="Protein kinase-like (PK-like)"/>
    <property type="match status" value="1"/>
</dbReference>
<dbReference type="PROSITE" id="PS51984">
    <property type="entry name" value="CPB1"/>
    <property type="match status" value="1"/>
</dbReference>
<dbReference type="PROSITE" id="PS51985">
    <property type="entry name" value="CPB2"/>
    <property type="match status" value="1"/>
</dbReference>
<dbReference type="PROSITE" id="PS50078">
    <property type="entry name" value="POLO_BOX"/>
    <property type="match status" value="1"/>
</dbReference>
<dbReference type="PROSITE" id="PS00107">
    <property type="entry name" value="PROTEIN_KINASE_ATP"/>
    <property type="match status" value="1"/>
</dbReference>
<dbReference type="PROSITE" id="PS50011">
    <property type="entry name" value="PROTEIN_KINASE_DOM"/>
    <property type="match status" value="1"/>
</dbReference>